<proteinExistence type="inferred from homology"/>
<accession>P0A1G0</accession>
<accession>P18643</accession>
<organism>
    <name type="scientific">Salmonella typhimurium</name>
    <dbReference type="NCBI Taxonomy" id="90371"/>
    <lineage>
        <taxon>Bacteria</taxon>
        <taxon>Pseudomonadati</taxon>
        <taxon>Pseudomonadota</taxon>
        <taxon>Gammaproteobacteria</taxon>
        <taxon>Enterobacterales</taxon>
        <taxon>Enterobacteriaceae</taxon>
        <taxon>Salmonella</taxon>
    </lineage>
</organism>
<protein>
    <recommendedName>
        <fullName>Protein ImpC</fullName>
    </recommendedName>
</protein>
<sequence>MIRIEILFDRQSTKNLKSGTLQALQNEIEQRLKPHYPEIWLRIDQGSAPSVSVTGARNDKDKERILSLLEEIWQDDSWLPAA</sequence>
<dbReference type="EMBL" id="X53528">
    <property type="protein sequence ID" value="CAA37606.1"/>
    <property type="molecule type" value="Genomic_DNA"/>
</dbReference>
<dbReference type="PIR" id="JQ0659">
    <property type="entry name" value="JQ0659"/>
</dbReference>
<dbReference type="RefSeq" id="NP_863408.1">
    <property type="nucleotide sequence ID" value="NC_005014.1"/>
</dbReference>
<dbReference type="RefSeq" id="WP_000618110.1">
    <property type="nucleotide sequence ID" value="NZ_WWEW01000280.1"/>
</dbReference>
<dbReference type="RefSeq" id="YP_004823696.1">
    <property type="nucleotide sequence ID" value="NC_015965.1"/>
</dbReference>
<dbReference type="RefSeq" id="YP_006955752.1">
    <property type="nucleotide sequence ID" value="NC_019111.1"/>
</dbReference>
<dbReference type="RefSeq" id="YP_009022402.1">
    <property type="nucleotide sequence ID" value="NC_023900.1"/>
</dbReference>
<dbReference type="SMR" id="P0A1G0"/>
<dbReference type="GO" id="GO:0006281">
    <property type="term" value="P:DNA repair"/>
    <property type="evidence" value="ECO:0007669"/>
    <property type="project" value="UniProtKB-KW"/>
</dbReference>
<dbReference type="GO" id="GO:0009432">
    <property type="term" value="P:SOS response"/>
    <property type="evidence" value="ECO:0007669"/>
    <property type="project" value="TreeGrafter"/>
</dbReference>
<dbReference type="Gene3D" id="3.30.910.10">
    <property type="entry name" value="DinI-like"/>
    <property type="match status" value="1"/>
</dbReference>
<dbReference type="InterPro" id="IPR036687">
    <property type="entry name" value="DinI-like_sf"/>
</dbReference>
<dbReference type="InterPro" id="IPR010391">
    <property type="entry name" value="DNA_damage-inducible_DinI-like"/>
</dbReference>
<dbReference type="PANTHER" id="PTHR36572:SF2">
    <property type="entry name" value="DNA DAMAGE-INDUCIBLE PROTEIN I"/>
    <property type="match status" value="1"/>
</dbReference>
<dbReference type="PANTHER" id="PTHR36572">
    <property type="entry name" value="DNA DAMAGE-INDUCIBLE PROTEIN I-RELATED"/>
    <property type="match status" value="1"/>
</dbReference>
<dbReference type="Pfam" id="PF06183">
    <property type="entry name" value="DinI"/>
    <property type="match status" value="1"/>
</dbReference>
<dbReference type="SUPFAM" id="SSF54857">
    <property type="entry name" value="DNA damage-inducible protein DinI"/>
    <property type="match status" value="1"/>
</dbReference>
<keyword id="KW-0227">DNA damage</keyword>
<keyword id="KW-0234">DNA repair</keyword>
<keyword id="KW-0614">Plasmid</keyword>
<geneLocation type="plasmid">
    <name>IncI1 TP110</name>
</geneLocation>
<feature type="chain" id="PRO_0000201642" description="Protein ImpC">
    <location>
        <begin position="1"/>
        <end position="82"/>
    </location>
</feature>
<gene>
    <name type="primary">impC</name>
</gene>
<name>IMPC1_SALTM</name>
<comment type="function">
    <text>The imp operon is involved in UV protection and mutation, however the ImpC protein is not essential for these functions.</text>
</comment>
<comment type="similarity">
    <text evidence="1">Belongs to the DinI family.</text>
</comment>
<reference key="1">
    <citation type="journal article" date="1990" name="Nucleic Acids Res.">
        <title>DNA sequence analysis of the imp UV protection and mutation operon of the plasmid TP110: identification of a third gene.</title>
        <authorList>
            <person name="Lodwick D."/>
            <person name="Owen D."/>
            <person name="Strike P."/>
        </authorList>
    </citation>
    <scope>NUCLEOTIDE SEQUENCE [GENOMIC DNA]</scope>
</reference>
<evidence type="ECO:0000305" key="1"/>